<sequence>MSQFTHINASGEANMVDVSAKAETVREARAEAFVQMSAETLELIVSGSHHKGDVFATARIAGIQAAKKTWDLIPLCHPLLLTKVEVQLEAIESENKVRIESVCKLAGKTGVEMEALTAASVAALTIYDMCKAVQKDIVIENVRLLEKTGGKSGHFKVES</sequence>
<accession>B7VLU6</accession>
<evidence type="ECO:0000255" key="1">
    <source>
        <dbReference type="HAMAP-Rule" id="MF_01224"/>
    </source>
</evidence>
<keyword id="KW-0456">Lyase</keyword>
<keyword id="KW-0501">Molybdenum cofactor biosynthesis</keyword>
<feature type="chain" id="PRO_1000164906" description="Cyclic pyranopterin monophosphate synthase">
    <location>
        <begin position="1"/>
        <end position="159"/>
    </location>
</feature>
<feature type="active site" evidence="1">
    <location>
        <position position="128"/>
    </location>
</feature>
<feature type="binding site" evidence="1">
    <location>
        <begin position="75"/>
        <end position="77"/>
    </location>
    <ligand>
        <name>substrate</name>
    </ligand>
</feature>
<feature type="binding site" evidence="1">
    <location>
        <begin position="113"/>
        <end position="114"/>
    </location>
    <ligand>
        <name>substrate</name>
    </ligand>
</feature>
<protein>
    <recommendedName>
        <fullName evidence="1">Cyclic pyranopterin monophosphate synthase</fullName>
        <ecNumber evidence="1">4.6.1.17</ecNumber>
    </recommendedName>
    <alternativeName>
        <fullName evidence="1">Molybdenum cofactor biosynthesis protein C</fullName>
    </alternativeName>
</protein>
<gene>
    <name evidence="1" type="primary">moaC</name>
    <name type="ordered locus">VS_0987</name>
</gene>
<organism>
    <name type="scientific">Vibrio atlanticus (strain LGP32)</name>
    <name type="common">Vibrio splendidus (strain Mel32)</name>
    <dbReference type="NCBI Taxonomy" id="575788"/>
    <lineage>
        <taxon>Bacteria</taxon>
        <taxon>Pseudomonadati</taxon>
        <taxon>Pseudomonadota</taxon>
        <taxon>Gammaproteobacteria</taxon>
        <taxon>Vibrionales</taxon>
        <taxon>Vibrionaceae</taxon>
        <taxon>Vibrio</taxon>
    </lineage>
</organism>
<dbReference type="EC" id="4.6.1.17" evidence="1"/>
<dbReference type="EMBL" id="FM954972">
    <property type="protein sequence ID" value="CAV18024.1"/>
    <property type="molecule type" value="Genomic_DNA"/>
</dbReference>
<dbReference type="SMR" id="B7VLU6"/>
<dbReference type="STRING" id="575788.VS_0987"/>
<dbReference type="KEGG" id="vsp:VS_0987"/>
<dbReference type="eggNOG" id="COG0315">
    <property type="taxonomic scope" value="Bacteria"/>
</dbReference>
<dbReference type="HOGENOM" id="CLU_074693_1_1_6"/>
<dbReference type="UniPathway" id="UPA00344"/>
<dbReference type="Proteomes" id="UP000009100">
    <property type="component" value="Chromosome 1"/>
</dbReference>
<dbReference type="GO" id="GO:0061799">
    <property type="term" value="F:cyclic pyranopterin monophosphate synthase activity"/>
    <property type="evidence" value="ECO:0007669"/>
    <property type="project" value="UniProtKB-UniRule"/>
</dbReference>
<dbReference type="GO" id="GO:0061798">
    <property type="term" value="F:GTP 3',8'-cyclase activity"/>
    <property type="evidence" value="ECO:0007669"/>
    <property type="project" value="TreeGrafter"/>
</dbReference>
<dbReference type="GO" id="GO:0006777">
    <property type="term" value="P:Mo-molybdopterin cofactor biosynthetic process"/>
    <property type="evidence" value="ECO:0007669"/>
    <property type="project" value="UniProtKB-UniRule"/>
</dbReference>
<dbReference type="CDD" id="cd01420">
    <property type="entry name" value="MoaC_PE"/>
    <property type="match status" value="1"/>
</dbReference>
<dbReference type="FunFam" id="3.30.70.640:FF:000001">
    <property type="entry name" value="Cyclic pyranopterin monophosphate synthase"/>
    <property type="match status" value="1"/>
</dbReference>
<dbReference type="Gene3D" id="3.30.70.640">
    <property type="entry name" value="Molybdopterin cofactor biosynthesis C (MoaC) domain"/>
    <property type="match status" value="1"/>
</dbReference>
<dbReference type="HAMAP" id="MF_01224_B">
    <property type="entry name" value="MoaC_B"/>
    <property type="match status" value="1"/>
</dbReference>
<dbReference type="InterPro" id="IPR023045">
    <property type="entry name" value="MoaC"/>
</dbReference>
<dbReference type="InterPro" id="IPR047594">
    <property type="entry name" value="MoaC_bact/euk"/>
</dbReference>
<dbReference type="InterPro" id="IPR036522">
    <property type="entry name" value="MoaC_sf"/>
</dbReference>
<dbReference type="InterPro" id="IPR050105">
    <property type="entry name" value="MoCo_biosynth_MoaA/MoaC"/>
</dbReference>
<dbReference type="InterPro" id="IPR002820">
    <property type="entry name" value="Mopterin_CF_biosynth-C_dom"/>
</dbReference>
<dbReference type="NCBIfam" id="TIGR00581">
    <property type="entry name" value="moaC"/>
    <property type="match status" value="1"/>
</dbReference>
<dbReference type="NCBIfam" id="NF006870">
    <property type="entry name" value="PRK09364.1"/>
    <property type="match status" value="1"/>
</dbReference>
<dbReference type="PANTHER" id="PTHR22960:SF0">
    <property type="entry name" value="MOLYBDENUM COFACTOR BIOSYNTHESIS PROTEIN 1"/>
    <property type="match status" value="1"/>
</dbReference>
<dbReference type="PANTHER" id="PTHR22960">
    <property type="entry name" value="MOLYBDOPTERIN COFACTOR SYNTHESIS PROTEIN A"/>
    <property type="match status" value="1"/>
</dbReference>
<dbReference type="Pfam" id="PF01967">
    <property type="entry name" value="MoaC"/>
    <property type="match status" value="1"/>
</dbReference>
<dbReference type="SUPFAM" id="SSF55040">
    <property type="entry name" value="Molybdenum cofactor biosynthesis protein C, MoaC"/>
    <property type="match status" value="1"/>
</dbReference>
<name>MOAC_VIBA3</name>
<comment type="function">
    <text evidence="1">Catalyzes the conversion of (8S)-3',8-cyclo-7,8-dihydroguanosine 5'-triphosphate to cyclic pyranopterin monophosphate (cPMP).</text>
</comment>
<comment type="catalytic activity">
    <reaction evidence="1">
        <text>(8S)-3',8-cyclo-7,8-dihydroguanosine 5'-triphosphate = cyclic pyranopterin phosphate + diphosphate</text>
        <dbReference type="Rhea" id="RHEA:49580"/>
        <dbReference type="ChEBI" id="CHEBI:33019"/>
        <dbReference type="ChEBI" id="CHEBI:59648"/>
        <dbReference type="ChEBI" id="CHEBI:131766"/>
        <dbReference type="EC" id="4.6.1.17"/>
    </reaction>
</comment>
<comment type="pathway">
    <text evidence="1">Cofactor biosynthesis; molybdopterin biosynthesis.</text>
</comment>
<comment type="subunit">
    <text evidence="1">Homohexamer; trimer of dimers.</text>
</comment>
<comment type="similarity">
    <text evidence="1">Belongs to the MoaC family.</text>
</comment>
<proteinExistence type="inferred from homology"/>
<reference key="1">
    <citation type="submission" date="2009-02" db="EMBL/GenBank/DDBJ databases">
        <title>Vibrio splendidus str. LGP32 complete genome.</title>
        <authorList>
            <person name="Mazel D."/>
            <person name="Le Roux F."/>
        </authorList>
    </citation>
    <scope>NUCLEOTIDE SEQUENCE [LARGE SCALE GENOMIC DNA]</scope>
    <source>
        <strain>LGP32</strain>
    </source>
</reference>